<reference key="1">
    <citation type="journal article" date="2003" name="Proc. Natl. Acad. Sci. U.S.A.">
        <title>The genome sequence of Clostridium tetani, the causative agent of tetanus disease.</title>
        <authorList>
            <person name="Brueggemann H."/>
            <person name="Baeumer S."/>
            <person name="Fricke W.F."/>
            <person name="Wiezer A."/>
            <person name="Liesegang H."/>
            <person name="Decker I."/>
            <person name="Herzberg C."/>
            <person name="Martinez-Arias R."/>
            <person name="Merkl R."/>
            <person name="Henne A."/>
            <person name="Gottschalk G."/>
        </authorList>
    </citation>
    <scope>NUCLEOTIDE SEQUENCE [LARGE SCALE GENOMIC DNA]</scope>
    <source>
        <strain>Massachusetts / E88</strain>
    </source>
</reference>
<evidence type="ECO:0000255" key="1">
    <source>
        <dbReference type="HAMAP-Rule" id="MF_00002"/>
    </source>
</evidence>
<comment type="function">
    <text evidence="1">Involved in allosteric regulation of aspartate carbamoyltransferase.</text>
</comment>
<comment type="cofactor">
    <cofactor evidence="1">
        <name>Zn(2+)</name>
        <dbReference type="ChEBI" id="CHEBI:29105"/>
    </cofactor>
    <text evidence="1">Binds 1 zinc ion per subunit.</text>
</comment>
<comment type="subunit">
    <text evidence="1">Contains catalytic and regulatory chains.</text>
</comment>
<comment type="similarity">
    <text evidence="1">Belongs to the PyrI family.</text>
</comment>
<accession>Q891I9</accession>
<proteinExistence type="inferred from homology"/>
<organism>
    <name type="scientific">Clostridium tetani (strain Massachusetts / E88)</name>
    <dbReference type="NCBI Taxonomy" id="212717"/>
    <lineage>
        <taxon>Bacteria</taxon>
        <taxon>Bacillati</taxon>
        <taxon>Bacillota</taxon>
        <taxon>Clostridia</taxon>
        <taxon>Eubacteriales</taxon>
        <taxon>Clostridiaceae</taxon>
        <taxon>Clostridium</taxon>
    </lineage>
</organism>
<protein>
    <recommendedName>
        <fullName evidence="1">Aspartate carbamoyltransferase regulatory chain</fullName>
    </recommendedName>
</protein>
<sequence>MLTITSIKDGIVIDHIKSGYGIKIFNYLNLKNVEYSVALIMNVFSSKLGKKDIIKIANKEIDIDFTVLGLIDPTITINIIEDEKIKEKLNLELPKKVEDVIRCKNPRCITSIEKYIPHVFYLIDKEKVEYKCKYCDEIYKVVEE</sequence>
<name>PYRI_CLOTE</name>
<gene>
    <name evidence="1" type="primary">pyrI</name>
    <name type="ordered locus">CTC_02383</name>
</gene>
<dbReference type="EMBL" id="AE015927">
    <property type="protein sequence ID" value="AAO36856.1"/>
    <property type="molecule type" value="Genomic_DNA"/>
</dbReference>
<dbReference type="RefSeq" id="WP_011100517.1">
    <property type="nucleotide sequence ID" value="NC_004557.1"/>
</dbReference>
<dbReference type="SMR" id="Q891I9"/>
<dbReference type="STRING" id="212717.CTC_02383"/>
<dbReference type="GeneID" id="24254309"/>
<dbReference type="KEGG" id="ctc:CTC_02383"/>
<dbReference type="HOGENOM" id="CLU_128576_0_0_9"/>
<dbReference type="OrthoDB" id="5599321at2"/>
<dbReference type="Proteomes" id="UP000001412">
    <property type="component" value="Chromosome"/>
</dbReference>
<dbReference type="GO" id="GO:0009347">
    <property type="term" value="C:aspartate carbamoyltransferase complex"/>
    <property type="evidence" value="ECO:0007669"/>
    <property type="project" value="InterPro"/>
</dbReference>
<dbReference type="GO" id="GO:0046872">
    <property type="term" value="F:metal ion binding"/>
    <property type="evidence" value="ECO:0007669"/>
    <property type="project" value="UniProtKB-KW"/>
</dbReference>
<dbReference type="GO" id="GO:0006207">
    <property type="term" value="P:'de novo' pyrimidine nucleobase biosynthetic process"/>
    <property type="evidence" value="ECO:0007669"/>
    <property type="project" value="InterPro"/>
</dbReference>
<dbReference type="GO" id="GO:0006221">
    <property type="term" value="P:pyrimidine nucleotide biosynthetic process"/>
    <property type="evidence" value="ECO:0007669"/>
    <property type="project" value="UniProtKB-UniRule"/>
</dbReference>
<dbReference type="Gene3D" id="2.30.30.20">
    <property type="entry name" value="Aspartate carbamoyltransferase regulatory subunit, C-terminal domain"/>
    <property type="match status" value="1"/>
</dbReference>
<dbReference type="Gene3D" id="3.30.70.140">
    <property type="entry name" value="Aspartate carbamoyltransferase regulatory subunit, N-terminal domain"/>
    <property type="match status" value="1"/>
</dbReference>
<dbReference type="HAMAP" id="MF_00002">
    <property type="entry name" value="Asp_carb_tr_reg"/>
    <property type="match status" value="1"/>
</dbReference>
<dbReference type="InterPro" id="IPR020545">
    <property type="entry name" value="Asp_carbamoyltransf_reg_N"/>
</dbReference>
<dbReference type="InterPro" id="IPR002801">
    <property type="entry name" value="Asp_carbamoylTrfase_reg"/>
</dbReference>
<dbReference type="InterPro" id="IPR020542">
    <property type="entry name" value="Asp_carbamoyltrfase_reg_C"/>
</dbReference>
<dbReference type="InterPro" id="IPR036792">
    <property type="entry name" value="Asp_carbatrfase_reg_C_sf"/>
</dbReference>
<dbReference type="InterPro" id="IPR036793">
    <property type="entry name" value="Asp_carbatrfase_reg_N_sf"/>
</dbReference>
<dbReference type="NCBIfam" id="NF002063">
    <property type="entry name" value="PRK00893.1-3"/>
    <property type="match status" value="1"/>
</dbReference>
<dbReference type="PANTHER" id="PTHR35805">
    <property type="entry name" value="ASPARTATE CARBAMOYLTRANSFERASE REGULATORY CHAIN"/>
    <property type="match status" value="1"/>
</dbReference>
<dbReference type="PANTHER" id="PTHR35805:SF1">
    <property type="entry name" value="ASPARTATE CARBAMOYLTRANSFERASE REGULATORY CHAIN"/>
    <property type="match status" value="1"/>
</dbReference>
<dbReference type="Pfam" id="PF01948">
    <property type="entry name" value="PyrI"/>
    <property type="match status" value="1"/>
</dbReference>
<dbReference type="Pfam" id="PF02748">
    <property type="entry name" value="PyrI_C"/>
    <property type="match status" value="1"/>
</dbReference>
<dbReference type="SUPFAM" id="SSF57825">
    <property type="entry name" value="Aspartate carbamoyltransferase, Regulatory-chain, C-terminal domain"/>
    <property type="match status" value="1"/>
</dbReference>
<dbReference type="SUPFAM" id="SSF54893">
    <property type="entry name" value="Aspartate carbamoyltransferase, Regulatory-chain, N-terminal domain"/>
    <property type="match status" value="1"/>
</dbReference>
<feature type="chain" id="PRO_0000142302" description="Aspartate carbamoyltransferase regulatory chain">
    <location>
        <begin position="1"/>
        <end position="144"/>
    </location>
</feature>
<feature type="binding site" evidence="1">
    <location>
        <position position="103"/>
    </location>
    <ligand>
        <name>Zn(2+)</name>
        <dbReference type="ChEBI" id="CHEBI:29105"/>
    </ligand>
</feature>
<feature type="binding site" evidence="1">
    <location>
        <position position="108"/>
    </location>
    <ligand>
        <name>Zn(2+)</name>
        <dbReference type="ChEBI" id="CHEBI:29105"/>
    </ligand>
</feature>
<feature type="binding site" evidence="1">
    <location>
        <position position="132"/>
    </location>
    <ligand>
        <name>Zn(2+)</name>
        <dbReference type="ChEBI" id="CHEBI:29105"/>
    </ligand>
</feature>
<feature type="binding site" evidence="1">
    <location>
        <position position="135"/>
    </location>
    <ligand>
        <name>Zn(2+)</name>
        <dbReference type="ChEBI" id="CHEBI:29105"/>
    </ligand>
</feature>
<keyword id="KW-0479">Metal-binding</keyword>
<keyword id="KW-0665">Pyrimidine biosynthesis</keyword>
<keyword id="KW-1185">Reference proteome</keyword>
<keyword id="KW-0862">Zinc</keyword>